<protein>
    <recommendedName>
        <fullName>Zinc transporter 8</fullName>
    </recommendedName>
    <alternativeName>
        <fullName>ZRT/IRT-like protein 8</fullName>
        <shortName>OsZIP8</shortName>
    </alternativeName>
</protein>
<evidence type="ECO:0000255" key="1"/>
<evidence type="ECO:0000256" key="2">
    <source>
        <dbReference type="SAM" id="MobiDB-lite"/>
    </source>
</evidence>
<evidence type="ECO:0000269" key="3">
    <source>
    </source>
</evidence>
<evidence type="ECO:0000269" key="4">
    <source>
    </source>
</evidence>
<evidence type="ECO:0000303" key="5">
    <source ref="2"/>
</evidence>
<evidence type="ECO:0000305" key="6"/>
<feature type="signal peptide" evidence="1">
    <location>
        <begin position="1"/>
        <end position="25"/>
    </location>
</feature>
<feature type="chain" id="PRO_0000398332" description="Zinc transporter 8">
    <location>
        <begin position="26"/>
        <end position="390"/>
    </location>
</feature>
<feature type="topological domain" description="Extracellular" evidence="1">
    <location>
        <begin position="26"/>
        <end position="50"/>
    </location>
</feature>
<feature type="transmembrane region" description="Helical" evidence="1">
    <location>
        <begin position="51"/>
        <end position="71"/>
    </location>
</feature>
<feature type="topological domain" description="Cytoplasmic" evidence="1">
    <location>
        <begin position="72"/>
        <end position="82"/>
    </location>
</feature>
<feature type="transmembrane region" description="Helical" evidence="1">
    <location>
        <begin position="83"/>
        <end position="103"/>
    </location>
</feature>
<feature type="topological domain" description="Extracellular" evidence="1">
    <location>
        <begin position="104"/>
        <end position="124"/>
    </location>
</feature>
<feature type="transmembrane region" description="Helical" evidence="1">
    <location>
        <begin position="125"/>
        <end position="145"/>
    </location>
</feature>
<feature type="topological domain" description="Cytoplasmic" evidence="1">
    <location>
        <begin position="146"/>
        <end position="235"/>
    </location>
</feature>
<feature type="transmembrane region" description="Helical" evidence="1">
    <location>
        <begin position="236"/>
        <end position="256"/>
    </location>
</feature>
<feature type="topological domain" description="Extracellular" evidence="1">
    <location>
        <begin position="257"/>
        <end position="267"/>
    </location>
</feature>
<feature type="transmembrane region" description="Helical" evidence="1">
    <location>
        <begin position="268"/>
        <end position="288"/>
    </location>
</feature>
<feature type="topological domain" description="Cytoplasmic" evidence="1">
    <location>
        <begin position="289"/>
        <end position="296"/>
    </location>
</feature>
<feature type="transmembrane region" description="Helical" evidence="1">
    <location>
        <begin position="297"/>
        <end position="317"/>
    </location>
</feature>
<feature type="topological domain" description="Extracellular" evidence="1">
    <location>
        <begin position="318"/>
        <end position="329"/>
    </location>
</feature>
<feature type="transmembrane region" description="Helical" evidence="1">
    <location>
        <begin position="330"/>
        <end position="350"/>
    </location>
</feature>
<feature type="topological domain" description="Cytoplasmic" evidence="1">
    <location>
        <begin position="351"/>
        <end position="369"/>
    </location>
</feature>
<feature type="transmembrane region" description="Helical" evidence="1">
    <location>
        <begin position="370"/>
        <end position="390"/>
    </location>
</feature>
<feature type="region of interest" description="Disordered" evidence="2">
    <location>
        <begin position="165"/>
        <end position="199"/>
    </location>
</feature>
<feature type="glycosylation site" description="N-linked (GlcNAc...) asparagine" evidence="1">
    <location>
        <position position="4"/>
    </location>
</feature>
<feature type="glycosylation site" description="N-linked (GlcNAc...) asparagine" evidence="1">
    <location>
        <position position="110"/>
    </location>
</feature>
<feature type="glycosylation site" description="N-linked (GlcNAc...) asparagine" evidence="1">
    <location>
        <position position="323"/>
    </location>
</feature>
<feature type="splice variant" id="VSP_039756" description="In isoform 2." evidence="5">
    <location>
        <begin position="165"/>
        <end position="197"/>
    </location>
</feature>
<feature type="sequence conflict" description="In Ref. 1; AAP88588." evidence="6" ref="1">
    <original>A</original>
    <variation>D</variation>
    <location>
        <position position="7"/>
    </location>
</feature>
<feature type="sequence conflict" description="In Ref. 2; AAP92123." evidence="6" ref="2">
    <original>K</original>
    <variation>Q</variation>
    <location>
        <position position="388"/>
    </location>
</feature>
<gene>
    <name type="primary">ZIP8</name>
    <name type="synonym">ZIP1</name>
    <name type="ordered locus">Os07g0232800</name>
    <name type="ordered locus">LOC_Os07g12890</name>
    <name type="ORF">OsJ_23626</name>
    <name type="ORF">OSJNBa0061L20.103</name>
    <name type="ORF">OSJNBa0086N05.143</name>
</gene>
<dbReference type="EMBL" id="AY324148">
    <property type="protein sequence ID" value="AAP88588.1"/>
    <property type="molecule type" value="mRNA"/>
</dbReference>
<dbReference type="EMBL" id="AY327038">
    <property type="protein sequence ID" value="AAP92123.1"/>
    <property type="molecule type" value="mRNA"/>
</dbReference>
<dbReference type="EMBL" id="AP005246">
    <property type="protein sequence ID" value="BAC21508.1"/>
    <property type="molecule type" value="Genomic_DNA"/>
</dbReference>
<dbReference type="EMBL" id="AP005774">
    <property type="protein sequence ID" value="BAD31696.1"/>
    <property type="molecule type" value="Genomic_DNA"/>
</dbReference>
<dbReference type="EMBL" id="AP008213">
    <property type="protein sequence ID" value="BAF21153.1"/>
    <property type="molecule type" value="Genomic_DNA"/>
</dbReference>
<dbReference type="EMBL" id="AP014963">
    <property type="protein sequence ID" value="BAT00723.1"/>
    <property type="molecule type" value="Genomic_DNA"/>
</dbReference>
<dbReference type="EMBL" id="CM000144">
    <property type="protein sequence ID" value="EAZ39200.1"/>
    <property type="molecule type" value="Genomic_DNA"/>
</dbReference>
<dbReference type="RefSeq" id="XP_015644611.1">
    <property type="nucleotide sequence ID" value="XM_015789125.1"/>
</dbReference>
<dbReference type="SMR" id="A3BI11"/>
<dbReference type="FunCoup" id="A3BI11">
    <property type="interactions" value="1906"/>
</dbReference>
<dbReference type="STRING" id="39947.A3BI11"/>
<dbReference type="TCDB" id="2.A.5.1.5">
    <property type="family name" value="the zinc (zn(2+))-iron (fe(2+)) permease (zip) family"/>
</dbReference>
<dbReference type="GlyCosmos" id="A3BI11">
    <property type="glycosylation" value="3 sites, No reported glycans"/>
</dbReference>
<dbReference type="PaxDb" id="39947-A3BI11"/>
<dbReference type="EnsemblPlants" id="Os07t0232800-01">
    <molecule id="A3BI11-1"/>
    <property type="protein sequence ID" value="Os07t0232800-01"/>
    <property type="gene ID" value="Os07g0232800"/>
</dbReference>
<dbReference type="Gramene" id="Os07t0232800-01">
    <molecule id="A3BI11-1"/>
    <property type="protein sequence ID" value="Os07t0232800-01"/>
    <property type="gene ID" value="Os07g0232800"/>
</dbReference>
<dbReference type="KEGG" id="dosa:Os07g0232800"/>
<dbReference type="eggNOG" id="KOG1558">
    <property type="taxonomic scope" value="Eukaryota"/>
</dbReference>
<dbReference type="InParanoid" id="A3BI11"/>
<dbReference type="OMA" id="HHHGHFN"/>
<dbReference type="OrthoDB" id="448280at2759"/>
<dbReference type="Proteomes" id="UP000000763">
    <property type="component" value="Chromosome 7"/>
</dbReference>
<dbReference type="Proteomes" id="UP000007752">
    <property type="component" value="Chromosome 7"/>
</dbReference>
<dbReference type="Proteomes" id="UP000059680">
    <property type="component" value="Chromosome 7"/>
</dbReference>
<dbReference type="GO" id="GO:0005886">
    <property type="term" value="C:plasma membrane"/>
    <property type="evidence" value="ECO:0000314"/>
    <property type="project" value="UniProtKB"/>
</dbReference>
<dbReference type="GO" id="GO:0005385">
    <property type="term" value="F:zinc ion transmembrane transporter activity"/>
    <property type="evidence" value="ECO:0000318"/>
    <property type="project" value="GO_Central"/>
</dbReference>
<dbReference type="GO" id="GO:0071577">
    <property type="term" value="P:zinc ion transmembrane transport"/>
    <property type="evidence" value="ECO:0000318"/>
    <property type="project" value="GO_Central"/>
</dbReference>
<dbReference type="GO" id="GO:0006829">
    <property type="term" value="P:zinc ion transport"/>
    <property type="evidence" value="ECO:0000315"/>
    <property type="project" value="UniProtKB"/>
</dbReference>
<dbReference type="InterPro" id="IPR003689">
    <property type="entry name" value="ZIP"/>
</dbReference>
<dbReference type="InterPro" id="IPR004698">
    <property type="entry name" value="Zn/Fe_permease_fun/pln"/>
</dbReference>
<dbReference type="NCBIfam" id="TIGR00820">
    <property type="entry name" value="zip"/>
    <property type="match status" value="1"/>
</dbReference>
<dbReference type="PANTHER" id="PTHR11040:SF35">
    <property type="entry name" value="ZINC TRANSPORTER 5"/>
    <property type="match status" value="1"/>
</dbReference>
<dbReference type="PANTHER" id="PTHR11040">
    <property type="entry name" value="ZINC/IRON TRANSPORTER"/>
    <property type="match status" value="1"/>
</dbReference>
<dbReference type="Pfam" id="PF02535">
    <property type="entry name" value="Zip"/>
    <property type="match status" value="1"/>
</dbReference>
<name>ZIP8_ORYSJ</name>
<sequence length="390" mass="40256">MRTNTTATVLLAAAVALLLATAARGDGGDGGCGKEDAAAGRDRARARGLKIAAFFSILVCGALGCGLPSLGRHVPALRPDGDVFFLVKAFAAGVILATGFIHILPDAFDNLTDDCLPAGGPWKEFPFAGFGAMVGAIGTLVVDTLATGYFTRALSKKDAATAAAVADEEKQSAAATQQHNHHHNHHVVGDGGGGGEEHEGQVHVHTHATHGHAHGSSALVAAVGEDDKETTLRHRVISQVLELGIVVHSVIIGISLGASQNPETIKPLVVALSFHQMFEGMGLGGCIVQAKFKVRSIVTMVLFFCLTTPVGIAVGVGISSVYNESSPTALVVEGILNSVAAGILIYMALVDLLAEDFMNPRVQSKGKLQLGINLAMLAGAGLMSMLAKWA</sequence>
<organism>
    <name type="scientific">Oryza sativa subsp. japonica</name>
    <name type="common">Rice</name>
    <dbReference type="NCBI Taxonomy" id="39947"/>
    <lineage>
        <taxon>Eukaryota</taxon>
        <taxon>Viridiplantae</taxon>
        <taxon>Streptophyta</taxon>
        <taxon>Embryophyta</taxon>
        <taxon>Tracheophyta</taxon>
        <taxon>Spermatophyta</taxon>
        <taxon>Magnoliopsida</taxon>
        <taxon>Liliopsida</taxon>
        <taxon>Poales</taxon>
        <taxon>Poaceae</taxon>
        <taxon>BOP clade</taxon>
        <taxon>Oryzoideae</taxon>
        <taxon>Oryzeae</taxon>
        <taxon>Oryzinae</taxon>
        <taxon>Oryza</taxon>
        <taxon>Oryza sativa</taxon>
    </lineage>
</organism>
<proteinExistence type="evidence at transcript level"/>
<reference key="1">
    <citation type="submission" date="2003-04" db="EMBL/GenBank/DDBJ databases">
        <title>Molecular characterization of a ZIP family in rice(Oryza sativa L.).</title>
        <authorList>
            <person name="Huang J."/>
            <person name="Zhang H."/>
        </authorList>
    </citation>
    <scope>NUCLEOTIDE SEQUENCE [MRNA] (ISOFORM 1)</scope>
    <source>
        <strain>cv. Jiu Caiqing</strain>
        <tissue>Root</tissue>
    </source>
</reference>
<reference key="2">
    <citation type="submission" date="2003-06" db="EMBL/GenBank/DDBJ databases">
        <title>An iron-regulated cation transporter from rice complements metal uptake-deficient yeast mutants.</title>
        <authorList>
            <person name="Quanhong Y."/>
            <person name="Rihe P."/>
            <person name="Aisheng X."/>
        </authorList>
    </citation>
    <scope>NUCLEOTIDE SEQUENCE [MRNA] (ISOFORM 2)</scope>
</reference>
<reference key="3">
    <citation type="journal article" date="2005" name="Nature">
        <title>The map-based sequence of the rice genome.</title>
        <authorList>
            <consortium name="International rice genome sequencing project (IRGSP)"/>
        </authorList>
    </citation>
    <scope>NUCLEOTIDE SEQUENCE [LARGE SCALE GENOMIC DNA]</scope>
    <source>
        <strain>cv. Nipponbare</strain>
    </source>
</reference>
<reference key="4">
    <citation type="journal article" date="2008" name="Nucleic Acids Res.">
        <title>The rice annotation project database (RAP-DB): 2008 update.</title>
        <authorList>
            <consortium name="The rice annotation project (RAP)"/>
        </authorList>
    </citation>
    <scope>GENOME REANNOTATION</scope>
    <source>
        <strain>cv. Nipponbare</strain>
    </source>
</reference>
<reference key="5">
    <citation type="journal article" date="2013" name="Rice">
        <title>Improvement of the Oryza sativa Nipponbare reference genome using next generation sequence and optical map data.</title>
        <authorList>
            <person name="Kawahara Y."/>
            <person name="de la Bastide M."/>
            <person name="Hamilton J.P."/>
            <person name="Kanamori H."/>
            <person name="McCombie W.R."/>
            <person name="Ouyang S."/>
            <person name="Schwartz D.C."/>
            <person name="Tanaka T."/>
            <person name="Wu J."/>
            <person name="Zhou S."/>
            <person name="Childs K.L."/>
            <person name="Davidson R.M."/>
            <person name="Lin H."/>
            <person name="Quesada-Ocampo L."/>
            <person name="Vaillancourt B."/>
            <person name="Sakai H."/>
            <person name="Lee S.S."/>
            <person name="Kim J."/>
            <person name="Numa H."/>
            <person name="Itoh T."/>
            <person name="Buell C.R."/>
            <person name="Matsumoto T."/>
        </authorList>
    </citation>
    <scope>GENOME REANNOTATION</scope>
    <source>
        <strain>cv. Nipponbare</strain>
    </source>
</reference>
<reference key="6">
    <citation type="journal article" date="2005" name="PLoS Biol.">
        <title>The genomes of Oryza sativa: a history of duplications.</title>
        <authorList>
            <person name="Yu J."/>
            <person name="Wang J."/>
            <person name="Lin W."/>
            <person name="Li S."/>
            <person name="Li H."/>
            <person name="Zhou J."/>
            <person name="Ni P."/>
            <person name="Dong W."/>
            <person name="Hu S."/>
            <person name="Zeng C."/>
            <person name="Zhang J."/>
            <person name="Zhang Y."/>
            <person name="Li R."/>
            <person name="Xu Z."/>
            <person name="Li S."/>
            <person name="Li X."/>
            <person name="Zheng H."/>
            <person name="Cong L."/>
            <person name="Lin L."/>
            <person name="Yin J."/>
            <person name="Geng J."/>
            <person name="Li G."/>
            <person name="Shi J."/>
            <person name="Liu J."/>
            <person name="Lv H."/>
            <person name="Li J."/>
            <person name="Wang J."/>
            <person name="Deng Y."/>
            <person name="Ran L."/>
            <person name="Shi X."/>
            <person name="Wang X."/>
            <person name="Wu Q."/>
            <person name="Li C."/>
            <person name="Ren X."/>
            <person name="Wang J."/>
            <person name="Wang X."/>
            <person name="Li D."/>
            <person name="Liu D."/>
            <person name="Zhang X."/>
            <person name="Ji Z."/>
            <person name="Zhao W."/>
            <person name="Sun Y."/>
            <person name="Zhang Z."/>
            <person name="Bao J."/>
            <person name="Han Y."/>
            <person name="Dong L."/>
            <person name="Ji J."/>
            <person name="Chen P."/>
            <person name="Wu S."/>
            <person name="Liu J."/>
            <person name="Xiao Y."/>
            <person name="Bu D."/>
            <person name="Tan J."/>
            <person name="Yang L."/>
            <person name="Ye C."/>
            <person name="Zhang J."/>
            <person name="Xu J."/>
            <person name="Zhou Y."/>
            <person name="Yu Y."/>
            <person name="Zhang B."/>
            <person name="Zhuang S."/>
            <person name="Wei H."/>
            <person name="Liu B."/>
            <person name="Lei M."/>
            <person name="Yu H."/>
            <person name="Li Y."/>
            <person name="Xu H."/>
            <person name="Wei S."/>
            <person name="He X."/>
            <person name="Fang L."/>
            <person name="Zhang Z."/>
            <person name="Zhang Y."/>
            <person name="Huang X."/>
            <person name="Su Z."/>
            <person name="Tong W."/>
            <person name="Li J."/>
            <person name="Tong Z."/>
            <person name="Li S."/>
            <person name="Ye J."/>
            <person name="Wang L."/>
            <person name="Fang L."/>
            <person name="Lei T."/>
            <person name="Chen C.-S."/>
            <person name="Chen H.-C."/>
            <person name="Xu Z."/>
            <person name="Li H."/>
            <person name="Huang H."/>
            <person name="Zhang F."/>
            <person name="Xu H."/>
            <person name="Li N."/>
            <person name="Zhao C."/>
            <person name="Li S."/>
            <person name="Dong L."/>
            <person name="Huang Y."/>
            <person name="Li L."/>
            <person name="Xi Y."/>
            <person name="Qi Q."/>
            <person name="Li W."/>
            <person name="Zhang B."/>
            <person name="Hu W."/>
            <person name="Zhang Y."/>
            <person name="Tian X."/>
            <person name="Jiao Y."/>
            <person name="Liang X."/>
            <person name="Jin J."/>
            <person name="Gao L."/>
            <person name="Zheng W."/>
            <person name="Hao B."/>
            <person name="Liu S.-M."/>
            <person name="Wang W."/>
            <person name="Yuan L."/>
            <person name="Cao M."/>
            <person name="McDermott J."/>
            <person name="Samudrala R."/>
            <person name="Wang J."/>
            <person name="Wong G.K.-S."/>
            <person name="Yang H."/>
        </authorList>
    </citation>
    <scope>NUCLEOTIDE SEQUENCE [LARGE SCALE GENOMIC DNA]</scope>
    <source>
        <strain>cv. Nipponbare</strain>
    </source>
</reference>
<reference key="7">
    <citation type="journal article" date="2009" name="Mol. Biol. Rep.">
        <title>Cloning and functional identification of two members of the ZIP (Zrt, Irt-like protein) gene family in rice (Oryza sativa L.).</title>
        <authorList>
            <person name="Yang X."/>
            <person name="Huang J."/>
            <person name="Jiang Y."/>
            <person name="Zhang H.S."/>
        </authorList>
    </citation>
    <scope>INDUCTION</scope>
</reference>
<reference key="8">
    <citation type="journal article" date="2010" name="Mol. Cells">
        <title>Zinc deficiency-inducible OsZIP8 encodes a plasma membrane-localized zinc transporter in rice.</title>
        <authorList>
            <person name="Lee S."/>
            <person name="Kim S.A."/>
            <person name="Lee J."/>
            <person name="Guerinot M.L."/>
            <person name="An G."/>
        </authorList>
    </citation>
    <scope>FUNCTION</scope>
    <scope>SUBCELLULAR LOCATION</scope>
    <scope>INDUCTION</scope>
</reference>
<comment type="function">
    <text evidence="4">Zinc transporter that may mediate zinc uptake from the rhizosphere and may be responsible for the translocation of zinc within the plant.</text>
</comment>
<comment type="subcellular location">
    <subcellularLocation>
        <location evidence="4">Cell membrane</location>
        <topology evidence="4">Multi-pass membrane protein</topology>
    </subcellularLocation>
</comment>
<comment type="alternative products">
    <event type="alternative splicing"/>
    <isoform>
        <id>A3BI11-1</id>
        <name>1</name>
        <sequence type="displayed"/>
    </isoform>
    <isoform>
        <id>A3BI11-2</id>
        <name>2</name>
        <sequence type="described" ref="VSP_039756"/>
    </isoform>
</comment>
<comment type="induction">
    <text evidence="3 4">By zinc deficiency in roots and shoots.</text>
</comment>
<comment type="miscellaneous">
    <text>Plants overexpressing ZIP8 show decreased zinc concentration in shoots and mature seeds, increased concentration in roots, and are shorter than wild-type plants when grown in field.</text>
</comment>
<comment type="similarity">
    <text evidence="6">Belongs to the ZIP transporter (TC 2.A.5) family.</text>
</comment>
<accession>A3BI11</accession>
<accession>Q7XJ42</accession>
<accession>Q7XJ47</accession>
<accession>Q8H385</accession>
<keyword id="KW-0025">Alternative splicing</keyword>
<keyword id="KW-1003">Cell membrane</keyword>
<keyword id="KW-0325">Glycoprotein</keyword>
<keyword id="KW-0406">Ion transport</keyword>
<keyword id="KW-0472">Membrane</keyword>
<keyword id="KW-1185">Reference proteome</keyword>
<keyword id="KW-0732">Signal</keyword>
<keyword id="KW-0812">Transmembrane</keyword>
<keyword id="KW-1133">Transmembrane helix</keyword>
<keyword id="KW-0813">Transport</keyword>
<keyword id="KW-0862">Zinc</keyword>
<keyword id="KW-0864">Zinc transport</keyword>